<sequence>MKFLTPLVLSSLASAAALNRRADMCGQWDTTTTDKFTLYNNLWGEGNADSGSQCTGLDSDDGNTIAWHTSWTWTGGAGQVKSFANVAYNFEATQLSQLSSIPSTWKWENTGSDIVADVAYDLFTSSSADGDEEYEIMIWLAALGGAGPISSTGSAIATPTVGGQSWSLYSGPNGQMTVFSFVASSTTEDFSADLNDFLKYLQEEQGMPSSQYLTHVQAGTEPFSGSNVKFTTSSYSVSVA</sequence>
<dbReference type="EC" id="3.2.1.151"/>
<dbReference type="EMBL" id="EQ963473">
    <property type="protein sequence ID" value="EED55644.1"/>
    <property type="molecule type" value="Genomic_DNA"/>
</dbReference>
<dbReference type="RefSeq" id="XP_002374426.1">
    <property type="nucleotide sequence ID" value="XM_002374385.1"/>
</dbReference>
<dbReference type="SMR" id="B8N3L3"/>
<dbReference type="STRING" id="332952.B8N3L3"/>
<dbReference type="EnsemblFungi" id="EED55644">
    <property type="protein sequence ID" value="EED55644"/>
    <property type="gene ID" value="AFLA_029160"/>
</dbReference>
<dbReference type="VEuPathDB" id="FungiDB:AFLA_000770"/>
<dbReference type="eggNOG" id="ENOG502RW43">
    <property type="taxonomic scope" value="Eukaryota"/>
</dbReference>
<dbReference type="HOGENOM" id="CLU_051064_0_1_1"/>
<dbReference type="OMA" id="NLWGQAQ"/>
<dbReference type="GO" id="GO:0005576">
    <property type="term" value="C:extracellular region"/>
    <property type="evidence" value="ECO:0007669"/>
    <property type="project" value="UniProtKB-SubCell"/>
</dbReference>
<dbReference type="GO" id="GO:0008810">
    <property type="term" value="F:cellulase activity"/>
    <property type="evidence" value="ECO:0007669"/>
    <property type="project" value="InterPro"/>
</dbReference>
<dbReference type="GO" id="GO:0033946">
    <property type="term" value="F:xyloglucan-specific endo-beta-1,4-glucanase activity"/>
    <property type="evidence" value="ECO:0007669"/>
    <property type="project" value="UniProtKB-EC"/>
</dbReference>
<dbReference type="GO" id="GO:0071555">
    <property type="term" value="P:cell wall organization"/>
    <property type="evidence" value="ECO:0007669"/>
    <property type="project" value="UniProtKB-KW"/>
</dbReference>
<dbReference type="GO" id="GO:0000272">
    <property type="term" value="P:polysaccharide catabolic process"/>
    <property type="evidence" value="ECO:0007669"/>
    <property type="project" value="UniProtKB-KW"/>
</dbReference>
<dbReference type="Gene3D" id="2.60.120.180">
    <property type="match status" value="1"/>
</dbReference>
<dbReference type="InterPro" id="IPR013320">
    <property type="entry name" value="ConA-like_dom_sf"/>
</dbReference>
<dbReference type="InterPro" id="IPR013319">
    <property type="entry name" value="GH11/12"/>
</dbReference>
<dbReference type="InterPro" id="IPR002594">
    <property type="entry name" value="GH12"/>
</dbReference>
<dbReference type="PANTHER" id="PTHR34002">
    <property type="entry name" value="BLR1656 PROTEIN"/>
    <property type="match status" value="1"/>
</dbReference>
<dbReference type="PANTHER" id="PTHR34002:SF9">
    <property type="entry name" value="XYLOGLUCAN-SPECIFIC ENDO-BETA-1,4-GLUCANASE A"/>
    <property type="match status" value="1"/>
</dbReference>
<dbReference type="Pfam" id="PF01670">
    <property type="entry name" value="Glyco_hydro_12"/>
    <property type="match status" value="1"/>
</dbReference>
<dbReference type="SUPFAM" id="SSF49899">
    <property type="entry name" value="Concanavalin A-like lectins/glucanases"/>
    <property type="match status" value="1"/>
</dbReference>
<protein>
    <recommendedName>
        <fullName>Probable xyloglucan-specific endo-beta-1,4-glucanase A</fullName>
        <ecNumber>3.2.1.151</ecNumber>
    </recommendedName>
    <alternativeName>
        <fullName>Xyloglucanase A</fullName>
    </alternativeName>
    <alternativeName>
        <fullName>Xyloglucanendohydrolase A</fullName>
    </alternativeName>
</protein>
<accession>B8N3L3</accession>
<comment type="function">
    <text evidence="1">Catalyzes endohydrolysis of 1,4-beta-D-glucosidic linkages in xyloglucan with retention of the beta-configuration of the glycosyl residues. Specific for xyloglucan and does not hydrolyze other cell wall components (By similarity).</text>
</comment>
<comment type="catalytic activity">
    <reaction>
        <text>xyloglucan + H2O = xyloglucan oligosaccharides.</text>
        <dbReference type="EC" id="3.2.1.151"/>
    </reaction>
</comment>
<comment type="subcellular location">
    <subcellularLocation>
        <location evidence="3">Secreted</location>
    </subcellularLocation>
</comment>
<comment type="similarity">
    <text evidence="3">Belongs to the glycosyl hydrolase 12 (cellulase H) family.</text>
</comment>
<gene>
    <name type="primary">xgeA</name>
    <name type="ORF">AFLA_029160</name>
</gene>
<name>XGEA_ASPFN</name>
<evidence type="ECO:0000250" key="1"/>
<evidence type="ECO:0000255" key="2"/>
<evidence type="ECO:0000305" key="3"/>
<keyword id="KW-0119">Carbohydrate metabolism</keyword>
<keyword id="KW-0961">Cell wall biogenesis/degradation</keyword>
<keyword id="KW-0326">Glycosidase</keyword>
<keyword id="KW-0378">Hydrolase</keyword>
<keyword id="KW-0624">Polysaccharide degradation</keyword>
<keyword id="KW-0964">Secreted</keyword>
<keyword id="KW-0732">Signal</keyword>
<reference key="1">
    <citation type="journal article" date="2015" name="Genome Announc.">
        <title>Genome sequence of Aspergillus flavus NRRL 3357, a strain that causes aflatoxin contamination of food and feed.</title>
        <authorList>
            <person name="Nierman W.C."/>
            <person name="Yu J."/>
            <person name="Fedorova-Abrams N.D."/>
            <person name="Losada L."/>
            <person name="Cleveland T.E."/>
            <person name="Bhatnagar D."/>
            <person name="Bennett J.W."/>
            <person name="Dean R."/>
            <person name="Payne G.A."/>
        </authorList>
    </citation>
    <scope>NUCLEOTIDE SEQUENCE [LARGE SCALE GENOMIC DNA]</scope>
    <source>
        <strain>ATCC 200026 / FGSC A1120 / IAM 13836 / NRRL 3357 / JCM 12722 / SRRC 167</strain>
    </source>
</reference>
<organism>
    <name type="scientific">Aspergillus flavus (strain ATCC 200026 / FGSC A1120 / IAM 13836 / NRRL 3357 / JCM 12722 / SRRC 167)</name>
    <dbReference type="NCBI Taxonomy" id="332952"/>
    <lineage>
        <taxon>Eukaryota</taxon>
        <taxon>Fungi</taxon>
        <taxon>Dikarya</taxon>
        <taxon>Ascomycota</taxon>
        <taxon>Pezizomycotina</taxon>
        <taxon>Eurotiomycetes</taxon>
        <taxon>Eurotiomycetidae</taxon>
        <taxon>Eurotiales</taxon>
        <taxon>Aspergillaceae</taxon>
        <taxon>Aspergillus</taxon>
        <taxon>Aspergillus subgen. Circumdati</taxon>
    </lineage>
</organism>
<proteinExistence type="inferred from homology"/>
<feature type="signal peptide" evidence="2">
    <location>
        <begin position="1"/>
        <end position="15"/>
    </location>
</feature>
<feature type="chain" id="PRO_0000394071" description="Probable xyloglucan-specific endo-beta-1,4-glucanase A">
    <location>
        <begin position="16"/>
        <end position="240"/>
    </location>
</feature>